<name>ATPA_ALIFM</name>
<keyword id="KW-0066">ATP synthesis</keyword>
<keyword id="KW-0067">ATP-binding</keyword>
<keyword id="KW-0997">Cell inner membrane</keyword>
<keyword id="KW-1003">Cell membrane</keyword>
<keyword id="KW-0139">CF(1)</keyword>
<keyword id="KW-0375">Hydrogen ion transport</keyword>
<keyword id="KW-0406">Ion transport</keyword>
<keyword id="KW-0472">Membrane</keyword>
<keyword id="KW-0547">Nucleotide-binding</keyword>
<keyword id="KW-1278">Translocase</keyword>
<keyword id="KW-0813">Transport</keyword>
<sequence>MQLNSTEISDLIKQRIEKFNVVTEARNEGTIVSVSDGIINIHGLADVMQGEMIELPGGRYALALNLNRDSVGAVVMGPYADLQEGMKVTGTGRILEVPVGPELLGRVVNTLGEPIDGKGPIEAKLTSPVEVIAPGVIDRKSVDQPVQTGYKSVDSMIPIGRGQRELIIGDRQTGKTAMAIDAIINQKDSGIFSIYVAIGQKASTIANVVRKLEEHGALANTIVVVASASESAALQYLAPYSGCAMGEYFRDRGEDALIVYDDLSKQAVAYRQISLLLKRPPGREAFPGDVFYLHSRLLERAARVSEAYVERFTNGEVTGKTGSLTALPIIETQAGDVSAFVPTNVISITDGQIFLQTELFTAGVRPAVDPGISVSRVGGSAQTKIIKKLSGGIRTALAQYRELAAFAQFSSDLDDATKKQLDHGEKVTELMKQKQYAPMSVFDQALVIFAAEKGYLKDVELAKLADFEEALLSYARGQFADLAKEIDTSGAWNNEIEAQFVKLVEDFKATQTW</sequence>
<proteinExistence type="inferred from homology"/>
<gene>
    <name evidence="1" type="primary">atpA</name>
    <name type="ordered locus">VFMJ11_2701</name>
</gene>
<evidence type="ECO:0000255" key="1">
    <source>
        <dbReference type="HAMAP-Rule" id="MF_01346"/>
    </source>
</evidence>
<feature type="chain" id="PRO_1000143451" description="ATP synthase subunit alpha">
    <location>
        <begin position="1"/>
        <end position="513"/>
    </location>
</feature>
<feature type="binding site" evidence="1">
    <location>
        <begin position="169"/>
        <end position="176"/>
    </location>
    <ligand>
        <name>ATP</name>
        <dbReference type="ChEBI" id="CHEBI:30616"/>
    </ligand>
</feature>
<feature type="site" description="Required for activity" evidence="1">
    <location>
        <position position="373"/>
    </location>
</feature>
<comment type="function">
    <text evidence="1">Produces ATP from ADP in the presence of a proton gradient across the membrane. The alpha chain is a regulatory subunit.</text>
</comment>
<comment type="catalytic activity">
    <reaction evidence="1">
        <text>ATP + H2O + 4 H(+)(in) = ADP + phosphate + 5 H(+)(out)</text>
        <dbReference type="Rhea" id="RHEA:57720"/>
        <dbReference type="ChEBI" id="CHEBI:15377"/>
        <dbReference type="ChEBI" id="CHEBI:15378"/>
        <dbReference type="ChEBI" id="CHEBI:30616"/>
        <dbReference type="ChEBI" id="CHEBI:43474"/>
        <dbReference type="ChEBI" id="CHEBI:456216"/>
        <dbReference type="EC" id="7.1.2.2"/>
    </reaction>
</comment>
<comment type="subunit">
    <text evidence="1">F-type ATPases have 2 components, CF(1) - the catalytic core - and CF(0) - the membrane proton channel. CF(1) has five subunits: alpha(3), beta(3), gamma(1), delta(1), epsilon(1). CF(0) has three main subunits: a(1), b(2) and c(9-12). The alpha and beta chains form an alternating ring which encloses part of the gamma chain. CF(1) is attached to CF(0) by a central stalk formed by the gamma and epsilon chains, while a peripheral stalk is formed by the delta and b chains.</text>
</comment>
<comment type="subcellular location">
    <subcellularLocation>
        <location evidence="1">Cell inner membrane</location>
        <topology evidence="1">Peripheral membrane protein</topology>
    </subcellularLocation>
</comment>
<comment type="similarity">
    <text evidence="1">Belongs to the ATPase alpha/beta chains family.</text>
</comment>
<reference key="1">
    <citation type="submission" date="2008-08" db="EMBL/GenBank/DDBJ databases">
        <title>Complete sequence of Vibrio fischeri strain MJ11.</title>
        <authorList>
            <person name="Mandel M.J."/>
            <person name="Stabb E.V."/>
            <person name="Ruby E.G."/>
            <person name="Ferriera S."/>
            <person name="Johnson J."/>
            <person name="Kravitz S."/>
            <person name="Beeson K."/>
            <person name="Sutton G."/>
            <person name="Rogers Y.-H."/>
            <person name="Friedman R."/>
            <person name="Frazier M."/>
            <person name="Venter J.C."/>
        </authorList>
    </citation>
    <scope>NUCLEOTIDE SEQUENCE [LARGE SCALE GENOMIC DNA]</scope>
    <source>
        <strain>MJ11</strain>
    </source>
</reference>
<accession>B5FCZ3</accession>
<protein>
    <recommendedName>
        <fullName evidence="1">ATP synthase subunit alpha</fullName>
        <ecNumber evidence="1">7.1.2.2</ecNumber>
    </recommendedName>
    <alternativeName>
        <fullName evidence="1">ATP synthase F1 sector subunit alpha</fullName>
    </alternativeName>
    <alternativeName>
        <fullName evidence="1">F-ATPase subunit alpha</fullName>
    </alternativeName>
</protein>
<organism>
    <name type="scientific">Aliivibrio fischeri (strain MJ11)</name>
    <name type="common">Vibrio fischeri</name>
    <dbReference type="NCBI Taxonomy" id="388396"/>
    <lineage>
        <taxon>Bacteria</taxon>
        <taxon>Pseudomonadati</taxon>
        <taxon>Pseudomonadota</taxon>
        <taxon>Gammaproteobacteria</taxon>
        <taxon>Vibrionales</taxon>
        <taxon>Vibrionaceae</taxon>
        <taxon>Aliivibrio</taxon>
    </lineage>
</organism>
<dbReference type="EC" id="7.1.2.2" evidence="1"/>
<dbReference type="EMBL" id="CP001139">
    <property type="protein sequence ID" value="ACH64819.1"/>
    <property type="molecule type" value="Genomic_DNA"/>
</dbReference>
<dbReference type="RefSeq" id="WP_005421589.1">
    <property type="nucleotide sequence ID" value="NC_011184.1"/>
</dbReference>
<dbReference type="SMR" id="B5FCZ3"/>
<dbReference type="GeneID" id="54165316"/>
<dbReference type="KEGG" id="vfm:VFMJ11_2701"/>
<dbReference type="HOGENOM" id="CLU_010091_2_1_6"/>
<dbReference type="Proteomes" id="UP000001857">
    <property type="component" value="Chromosome I"/>
</dbReference>
<dbReference type="GO" id="GO:0005886">
    <property type="term" value="C:plasma membrane"/>
    <property type="evidence" value="ECO:0007669"/>
    <property type="project" value="UniProtKB-SubCell"/>
</dbReference>
<dbReference type="GO" id="GO:0045259">
    <property type="term" value="C:proton-transporting ATP synthase complex"/>
    <property type="evidence" value="ECO:0007669"/>
    <property type="project" value="UniProtKB-KW"/>
</dbReference>
<dbReference type="GO" id="GO:0043531">
    <property type="term" value="F:ADP binding"/>
    <property type="evidence" value="ECO:0007669"/>
    <property type="project" value="TreeGrafter"/>
</dbReference>
<dbReference type="GO" id="GO:0005524">
    <property type="term" value="F:ATP binding"/>
    <property type="evidence" value="ECO:0007669"/>
    <property type="project" value="UniProtKB-UniRule"/>
</dbReference>
<dbReference type="GO" id="GO:0046933">
    <property type="term" value="F:proton-transporting ATP synthase activity, rotational mechanism"/>
    <property type="evidence" value="ECO:0007669"/>
    <property type="project" value="UniProtKB-UniRule"/>
</dbReference>
<dbReference type="CDD" id="cd18113">
    <property type="entry name" value="ATP-synt_F1_alpha_C"/>
    <property type="match status" value="1"/>
</dbReference>
<dbReference type="CDD" id="cd18116">
    <property type="entry name" value="ATP-synt_F1_alpha_N"/>
    <property type="match status" value="1"/>
</dbReference>
<dbReference type="CDD" id="cd01132">
    <property type="entry name" value="F1-ATPase_alpha_CD"/>
    <property type="match status" value="1"/>
</dbReference>
<dbReference type="FunFam" id="1.20.150.20:FF:000001">
    <property type="entry name" value="ATP synthase subunit alpha"/>
    <property type="match status" value="1"/>
</dbReference>
<dbReference type="FunFam" id="2.40.30.20:FF:000001">
    <property type="entry name" value="ATP synthase subunit alpha"/>
    <property type="match status" value="1"/>
</dbReference>
<dbReference type="FunFam" id="3.40.50.300:FF:000002">
    <property type="entry name" value="ATP synthase subunit alpha"/>
    <property type="match status" value="1"/>
</dbReference>
<dbReference type="Gene3D" id="2.40.30.20">
    <property type="match status" value="1"/>
</dbReference>
<dbReference type="Gene3D" id="1.20.150.20">
    <property type="entry name" value="ATP synthase alpha/beta chain, C-terminal domain"/>
    <property type="match status" value="1"/>
</dbReference>
<dbReference type="Gene3D" id="3.40.50.300">
    <property type="entry name" value="P-loop containing nucleotide triphosphate hydrolases"/>
    <property type="match status" value="1"/>
</dbReference>
<dbReference type="HAMAP" id="MF_01346">
    <property type="entry name" value="ATP_synth_alpha_bact"/>
    <property type="match status" value="1"/>
</dbReference>
<dbReference type="InterPro" id="IPR023366">
    <property type="entry name" value="ATP_synth_asu-like_sf"/>
</dbReference>
<dbReference type="InterPro" id="IPR000793">
    <property type="entry name" value="ATP_synth_asu_C"/>
</dbReference>
<dbReference type="InterPro" id="IPR038376">
    <property type="entry name" value="ATP_synth_asu_C_sf"/>
</dbReference>
<dbReference type="InterPro" id="IPR033732">
    <property type="entry name" value="ATP_synth_F1_a_nt-bd_dom"/>
</dbReference>
<dbReference type="InterPro" id="IPR005294">
    <property type="entry name" value="ATP_synth_F1_asu"/>
</dbReference>
<dbReference type="InterPro" id="IPR020003">
    <property type="entry name" value="ATPase_a/bsu_AS"/>
</dbReference>
<dbReference type="InterPro" id="IPR004100">
    <property type="entry name" value="ATPase_F1/V1/A1_a/bsu_N"/>
</dbReference>
<dbReference type="InterPro" id="IPR036121">
    <property type="entry name" value="ATPase_F1/V1/A1_a/bsu_N_sf"/>
</dbReference>
<dbReference type="InterPro" id="IPR000194">
    <property type="entry name" value="ATPase_F1/V1/A1_a/bsu_nucl-bd"/>
</dbReference>
<dbReference type="InterPro" id="IPR027417">
    <property type="entry name" value="P-loop_NTPase"/>
</dbReference>
<dbReference type="NCBIfam" id="TIGR00962">
    <property type="entry name" value="atpA"/>
    <property type="match status" value="1"/>
</dbReference>
<dbReference type="NCBIfam" id="NF009884">
    <property type="entry name" value="PRK13343.1"/>
    <property type="match status" value="1"/>
</dbReference>
<dbReference type="PANTHER" id="PTHR48082">
    <property type="entry name" value="ATP SYNTHASE SUBUNIT ALPHA, MITOCHONDRIAL"/>
    <property type="match status" value="1"/>
</dbReference>
<dbReference type="PANTHER" id="PTHR48082:SF2">
    <property type="entry name" value="ATP SYNTHASE SUBUNIT ALPHA, MITOCHONDRIAL"/>
    <property type="match status" value="1"/>
</dbReference>
<dbReference type="Pfam" id="PF00006">
    <property type="entry name" value="ATP-synt_ab"/>
    <property type="match status" value="1"/>
</dbReference>
<dbReference type="Pfam" id="PF00306">
    <property type="entry name" value="ATP-synt_ab_C"/>
    <property type="match status" value="1"/>
</dbReference>
<dbReference type="Pfam" id="PF02874">
    <property type="entry name" value="ATP-synt_ab_N"/>
    <property type="match status" value="1"/>
</dbReference>
<dbReference type="SUPFAM" id="SSF47917">
    <property type="entry name" value="C-terminal domain of alpha and beta subunits of F1 ATP synthase"/>
    <property type="match status" value="1"/>
</dbReference>
<dbReference type="SUPFAM" id="SSF50615">
    <property type="entry name" value="N-terminal domain of alpha and beta subunits of F1 ATP synthase"/>
    <property type="match status" value="1"/>
</dbReference>
<dbReference type="SUPFAM" id="SSF52540">
    <property type="entry name" value="P-loop containing nucleoside triphosphate hydrolases"/>
    <property type="match status" value="1"/>
</dbReference>
<dbReference type="PROSITE" id="PS00152">
    <property type="entry name" value="ATPASE_ALPHA_BETA"/>
    <property type="match status" value="1"/>
</dbReference>